<reference key="1">
    <citation type="journal article" date="1997" name="Nature">
        <title>The complete genome sequence of the hyperthermophilic, sulphate-reducing archaeon Archaeoglobus fulgidus.</title>
        <authorList>
            <person name="Klenk H.-P."/>
            <person name="Clayton R.A."/>
            <person name="Tomb J.-F."/>
            <person name="White O."/>
            <person name="Nelson K.E."/>
            <person name="Ketchum K.A."/>
            <person name="Dodson R.J."/>
            <person name="Gwinn M.L."/>
            <person name="Hickey E.K."/>
            <person name="Peterson J.D."/>
            <person name="Richardson D.L."/>
            <person name="Kerlavage A.R."/>
            <person name="Graham D.E."/>
            <person name="Kyrpides N.C."/>
            <person name="Fleischmann R.D."/>
            <person name="Quackenbush J."/>
            <person name="Lee N.H."/>
            <person name="Sutton G.G."/>
            <person name="Gill S.R."/>
            <person name="Kirkness E.F."/>
            <person name="Dougherty B.A."/>
            <person name="McKenney K."/>
            <person name="Adams M.D."/>
            <person name="Loftus B.J."/>
            <person name="Peterson S.N."/>
            <person name="Reich C.I."/>
            <person name="McNeil L.K."/>
            <person name="Badger J.H."/>
            <person name="Glodek A."/>
            <person name="Zhou L."/>
            <person name="Overbeek R."/>
            <person name="Gocayne J.D."/>
            <person name="Weidman J.F."/>
            <person name="McDonald L.A."/>
            <person name="Utterback T.R."/>
            <person name="Cotton M.D."/>
            <person name="Spriggs T."/>
            <person name="Artiach P."/>
            <person name="Kaine B.P."/>
            <person name="Sykes S.M."/>
            <person name="Sadow P.W."/>
            <person name="D'Andrea K.P."/>
            <person name="Bowman C."/>
            <person name="Fujii C."/>
            <person name="Garland S.A."/>
            <person name="Mason T.M."/>
            <person name="Olsen G.J."/>
            <person name="Fraser C.M."/>
            <person name="Smith H.O."/>
            <person name="Woese C.R."/>
            <person name="Venter J.C."/>
        </authorList>
    </citation>
    <scope>NUCLEOTIDE SEQUENCE [LARGE SCALE GENOMIC DNA]</scope>
    <source>
        <strain>ATCC 49558 / DSM 4304 / JCM 9628 / NBRC 100126 / VC-16</strain>
    </source>
</reference>
<reference key="2">
    <citation type="journal article" date="2013" name="Biochem. Biophys. Res. Commun.">
        <title>Crystal structure of Cas1 from Archaeoglobus fulgidus and characterization of its nucleolytic activity.</title>
        <authorList>
            <person name="Kim T.Y."/>
            <person name="Shin M."/>
            <person name="Huynh Thi Yen L."/>
            <person name="Kim J.S."/>
        </authorList>
    </citation>
    <scope>X-RAY CRYSTALLOGRAPHY (2.4 ANGSTROMS)</scope>
    <scope>FUNCTION AS A NUCLEASE</scope>
    <scope>COFACTOR</scope>
    <scope>SUBUNIT</scope>
    <scope>MUTAGENESIS OF GLU-168; HIS-239 AND GLU-254</scope>
    <source>
        <strain>ATCC 49558 / DSM 4304 / JCM 9628 / NBRC 100126 / VC-16</strain>
    </source>
</reference>
<gene>
    <name evidence="2" type="primary">cas1-1</name>
    <name type="ordered locus">AF_1878</name>
</gene>
<name>CAS1A_ARCFU</name>
<protein>
    <recommendedName>
        <fullName evidence="2">CRISPR-associated endonuclease Cas1 1</fullName>
        <ecNumber evidence="2">3.1.-.-</ecNumber>
    </recommendedName>
</protein>
<accession>O28401</accession>
<evidence type="ECO:0000250" key="1"/>
<evidence type="ECO:0000255" key="2">
    <source>
        <dbReference type="HAMAP-Rule" id="MF_01470"/>
    </source>
</evidence>
<evidence type="ECO:0000269" key="3">
    <source>
    </source>
</evidence>
<evidence type="ECO:0000305" key="4"/>
<evidence type="ECO:0007829" key="5">
    <source>
        <dbReference type="PDB" id="4N06"/>
    </source>
</evidence>
<feature type="chain" id="PRO_0000417093" description="CRISPR-associated endonuclease Cas1 1">
    <location>
        <begin position="1"/>
        <end position="345"/>
    </location>
</feature>
<feature type="binding site" evidence="4">
    <location>
        <position position="168"/>
    </location>
    <ligand>
        <name>a divalent metal cation</name>
        <dbReference type="ChEBI" id="CHEBI:60240"/>
    </ligand>
</feature>
<feature type="binding site" evidence="4">
    <location>
        <position position="239"/>
    </location>
    <ligand>
        <name>a divalent metal cation</name>
        <dbReference type="ChEBI" id="CHEBI:60240"/>
    </ligand>
</feature>
<feature type="binding site" evidence="4">
    <location>
        <position position="254"/>
    </location>
    <ligand>
        <name>a divalent metal cation</name>
        <dbReference type="ChEBI" id="CHEBI:60240"/>
    </ligand>
</feature>
<feature type="mutagenesis site" description="Binds but no longer cleaves ssRNA." evidence="3">
    <original>E</original>
    <variation>A</variation>
    <location>
        <position position="168"/>
    </location>
</feature>
<feature type="mutagenesis site" description="Binds but no longer cleaves ssRNA." evidence="3">
    <original>H</original>
    <variation>A</variation>
    <location>
        <position position="239"/>
    </location>
</feature>
<feature type="mutagenesis site" description="Binds but no longer cleaves ssRNA." evidence="3">
    <original>E</original>
    <variation>A</variation>
    <location>
        <position position="254"/>
    </location>
</feature>
<feature type="strand" evidence="5">
    <location>
        <begin position="1"/>
        <end position="7"/>
    </location>
</feature>
<feature type="strand" evidence="5">
    <location>
        <begin position="10"/>
        <end position="15"/>
    </location>
</feature>
<feature type="strand" evidence="5">
    <location>
        <begin position="18"/>
        <end position="23"/>
    </location>
</feature>
<feature type="strand" evidence="5">
    <location>
        <begin position="26"/>
        <end position="31"/>
    </location>
</feature>
<feature type="helix" evidence="5">
    <location>
        <begin position="33"/>
        <end position="35"/>
    </location>
</feature>
<feature type="strand" evidence="5">
    <location>
        <begin position="36"/>
        <end position="42"/>
    </location>
</feature>
<feature type="strand" evidence="5">
    <location>
        <begin position="46"/>
        <end position="48"/>
    </location>
</feature>
<feature type="helix" evidence="5">
    <location>
        <begin position="49"/>
        <end position="57"/>
    </location>
</feature>
<feature type="strand" evidence="5">
    <location>
        <begin position="61"/>
        <end position="65"/>
    </location>
</feature>
<feature type="strand" evidence="5">
    <location>
        <begin position="71"/>
        <end position="75"/>
    </location>
</feature>
<feature type="helix" evidence="5">
    <location>
        <begin position="83"/>
        <end position="92"/>
    </location>
</feature>
<feature type="helix" evidence="5">
    <location>
        <begin position="96"/>
        <end position="123"/>
    </location>
</feature>
<feature type="turn" evidence="5">
    <location>
        <begin position="124"/>
        <end position="127"/>
    </location>
</feature>
<feature type="helix" evidence="5">
    <location>
        <begin position="129"/>
        <end position="150"/>
    </location>
</feature>
<feature type="helix" evidence="5">
    <location>
        <begin position="157"/>
        <end position="182"/>
    </location>
</feature>
<feature type="helix" evidence="5">
    <location>
        <begin position="185"/>
        <end position="187"/>
    </location>
</feature>
<feature type="helix" evidence="5">
    <location>
        <begin position="206"/>
        <end position="228"/>
    </location>
</feature>
<feature type="strand" evidence="5">
    <location>
        <begin position="237"/>
        <end position="239"/>
    </location>
</feature>
<feature type="helix" evidence="5">
    <location>
        <begin position="247"/>
        <end position="253"/>
    </location>
</feature>
<feature type="turn" evidence="5">
    <location>
        <begin position="254"/>
        <end position="256"/>
    </location>
</feature>
<feature type="helix" evidence="5">
    <location>
        <begin position="257"/>
        <end position="270"/>
    </location>
</feature>
<feature type="helix" evidence="5">
    <location>
        <begin position="276"/>
        <end position="278"/>
    </location>
</feature>
<feature type="strand" evidence="5">
    <location>
        <begin position="279"/>
        <end position="282"/>
    </location>
</feature>
<feature type="strand" evidence="5">
    <location>
        <begin position="285"/>
        <end position="288"/>
    </location>
</feature>
<feature type="helix" evidence="5">
    <location>
        <begin position="290"/>
        <end position="305"/>
    </location>
</feature>
<feature type="strand" evidence="5">
    <location>
        <begin position="307"/>
        <end position="310"/>
    </location>
</feature>
<feature type="strand" evidence="5">
    <location>
        <begin position="313"/>
        <end position="316"/>
    </location>
</feature>
<feature type="helix" evidence="5">
    <location>
        <begin position="317"/>
        <end position="332"/>
    </location>
</feature>
<proteinExistence type="evidence at protein level"/>
<organism>
    <name type="scientific">Archaeoglobus fulgidus (strain ATCC 49558 / DSM 4304 / JCM 9628 / NBRC 100126 / VC-16)</name>
    <dbReference type="NCBI Taxonomy" id="224325"/>
    <lineage>
        <taxon>Archaea</taxon>
        <taxon>Methanobacteriati</taxon>
        <taxon>Methanobacteriota</taxon>
        <taxon>Archaeoglobi</taxon>
        <taxon>Archaeoglobales</taxon>
        <taxon>Archaeoglobaceae</taxon>
        <taxon>Archaeoglobus</taxon>
    </lineage>
</organism>
<dbReference type="EC" id="3.1.-.-" evidence="2"/>
<dbReference type="EMBL" id="AE000782">
    <property type="protein sequence ID" value="AAB89374.1"/>
    <property type="molecule type" value="Genomic_DNA"/>
</dbReference>
<dbReference type="PIR" id="E69484">
    <property type="entry name" value="E69484"/>
</dbReference>
<dbReference type="PDB" id="4N06">
    <property type="method" value="X-ray"/>
    <property type="resolution" value="2.40 A"/>
    <property type="chains" value="A/B=1-345"/>
</dbReference>
<dbReference type="PDBsum" id="4N06"/>
<dbReference type="SMR" id="O28401"/>
<dbReference type="STRING" id="224325.AF_1878"/>
<dbReference type="PaxDb" id="224325-AF_1878"/>
<dbReference type="DNASU" id="1485099"/>
<dbReference type="EnsemblBacteria" id="AAB89374">
    <property type="protein sequence ID" value="AAB89374"/>
    <property type="gene ID" value="AF_1878"/>
</dbReference>
<dbReference type="KEGG" id="afu:AF_1878"/>
<dbReference type="eggNOG" id="arCOG01452">
    <property type="taxonomic scope" value="Archaea"/>
</dbReference>
<dbReference type="HOGENOM" id="CLU_052779_0_0_2"/>
<dbReference type="OrthoDB" id="124387at2157"/>
<dbReference type="PhylomeDB" id="O28401"/>
<dbReference type="EvolutionaryTrace" id="O28401"/>
<dbReference type="Proteomes" id="UP000002199">
    <property type="component" value="Chromosome"/>
</dbReference>
<dbReference type="GO" id="GO:0003677">
    <property type="term" value="F:DNA binding"/>
    <property type="evidence" value="ECO:0007669"/>
    <property type="project" value="UniProtKB-KW"/>
</dbReference>
<dbReference type="GO" id="GO:0004519">
    <property type="term" value="F:endonuclease activity"/>
    <property type="evidence" value="ECO:0007669"/>
    <property type="project" value="UniProtKB-UniRule"/>
</dbReference>
<dbReference type="GO" id="GO:0046872">
    <property type="term" value="F:metal ion binding"/>
    <property type="evidence" value="ECO:0007669"/>
    <property type="project" value="UniProtKB-UniRule"/>
</dbReference>
<dbReference type="GO" id="GO:0003723">
    <property type="term" value="F:RNA binding"/>
    <property type="evidence" value="ECO:0007669"/>
    <property type="project" value="UniProtKB-KW"/>
</dbReference>
<dbReference type="GO" id="GO:0051607">
    <property type="term" value="P:defense response to virus"/>
    <property type="evidence" value="ECO:0007669"/>
    <property type="project" value="UniProtKB-UniRule"/>
</dbReference>
<dbReference type="GO" id="GO:0043571">
    <property type="term" value="P:maintenance of CRISPR repeat elements"/>
    <property type="evidence" value="ECO:0007669"/>
    <property type="project" value="UniProtKB-UniRule"/>
</dbReference>
<dbReference type="CDD" id="cd09636">
    <property type="entry name" value="Cas1_I-II-III"/>
    <property type="match status" value="1"/>
</dbReference>
<dbReference type="Gene3D" id="1.20.120.920">
    <property type="entry name" value="CRISPR-associated endonuclease Cas1, C-terminal domain"/>
    <property type="match status" value="1"/>
</dbReference>
<dbReference type="Gene3D" id="3.100.10.20">
    <property type="entry name" value="CRISPR-associated endonuclease Cas1, N-terminal domain"/>
    <property type="match status" value="1"/>
</dbReference>
<dbReference type="HAMAP" id="MF_01470">
    <property type="entry name" value="Cas1"/>
    <property type="match status" value="1"/>
</dbReference>
<dbReference type="InterPro" id="IPR050646">
    <property type="entry name" value="Cas1"/>
</dbReference>
<dbReference type="InterPro" id="IPR002729">
    <property type="entry name" value="CRISPR-assoc_Cas1"/>
</dbReference>
<dbReference type="InterPro" id="IPR042206">
    <property type="entry name" value="CRISPR-assoc_Cas1_C"/>
</dbReference>
<dbReference type="InterPro" id="IPR042211">
    <property type="entry name" value="CRISPR-assoc_Cas1_N"/>
</dbReference>
<dbReference type="NCBIfam" id="TIGR00287">
    <property type="entry name" value="cas1"/>
    <property type="match status" value="1"/>
</dbReference>
<dbReference type="PANTHER" id="PTHR34353">
    <property type="entry name" value="CRISPR-ASSOCIATED ENDONUCLEASE CAS1 1"/>
    <property type="match status" value="1"/>
</dbReference>
<dbReference type="PANTHER" id="PTHR34353:SF2">
    <property type="entry name" value="CRISPR-ASSOCIATED ENDONUCLEASE CAS1 1"/>
    <property type="match status" value="1"/>
</dbReference>
<dbReference type="Pfam" id="PF01867">
    <property type="entry name" value="Cas_Cas1"/>
    <property type="match status" value="1"/>
</dbReference>
<sequence>MRLVVDGFGKYLGIENGLIVVKEKGKALRKVRPEDLKQVLIIGKAAISSDAIKLLLKNRVDVVFLDFNGEILGRLSHPLIGTAKTRREQYLAYGDKRGVHLAKEFIKAKMANQMAILTNLAKARKDSNPEVAESLLKAKKEIDACLNELDGVEAEMIDKVRERLLGIEGKASKHYWDAISLVIPEEYRFNGRRGIEIGSPRYAKDIVNAMLNYGYSILLAECVKAVELAGLDPYAGFLHVDVSGRSSLAIDLMENFRQQVVDRVVLRLISYRQIKPEDCEKRNMVCQLSDNARRLLLASLLERLDSKTQYRGRNLAYSSIILLHARDVVAFLRGERRYEGFVQKW</sequence>
<comment type="function">
    <text evidence="1 3">CRISPR (clustered regularly interspaced short palindromic repeat), is an adaptive immune system that provides protection against mobile genetic elements (viruses, transposable elements and conjugative plasmids). CRISPR clusters contain sequences complementary to antecedent mobile elements and target invading nucleic acids. CRISPR clusters are transcribed and processed into CRISPR RNA (crRNA). Involved in the integration of spacer DNA into the CRISPR cassette (By similarity). Acts as a dsDNA and ssRNA nuclease, binds to linear and circular dsDNA and linear ssRNA and ssDNA.</text>
</comment>
<comment type="cofactor">
    <cofactor evidence="3">
        <name>a divalent metal cation</name>
        <dbReference type="ChEBI" id="CHEBI:60240"/>
    </cofactor>
</comment>
<comment type="subunit">
    <text evidence="1 3">Forms a heterotetramer with a Cas2 homodimer (By similarity). Homodimer.</text>
</comment>
<comment type="similarity">
    <text evidence="2">Belongs to the CRISPR-associated endonuclease Cas1 family.</text>
</comment>
<keyword id="KW-0002">3D-structure</keyword>
<keyword id="KW-0051">Antiviral defense</keyword>
<keyword id="KW-0238">DNA-binding</keyword>
<keyword id="KW-0255">Endonuclease</keyword>
<keyword id="KW-0378">Hydrolase</keyword>
<keyword id="KW-0460">Magnesium</keyword>
<keyword id="KW-0464">Manganese</keyword>
<keyword id="KW-0479">Metal-binding</keyword>
<keyword id="KW-0540">Nuclease</keyword>
<keyword id="KW-1185">Reference proteome</keyword>
<keyword id="KW-0694">RNA-binding</keyword>